<sequence length="568" mass="63620">MLLRFRSKIGMNRVSCEATDLFGDVVENWVKEVGLNVDPGTVVVGNDPGSAKEPVSNIAGRSVEEMGLKHGDIVYIEYSDSSGSNEGQSVPVNAVGAGSAVISELPVDVLLEKEDGLIKRTRSSLCKHGDKGMCEYCSPLPPWDKEYHAENKLKHISFHSYLKKLNEATNKKSSGSSYIPPLSQPDYKINKRCNNGHEPWPRGICSKCQPSAITLQQQEFRMVDHVEIQQSDLINQFIESWRATGMQRFGYLYGSYEKYDSTPLGVKAVVHAIYEPPQHDEQDGLTMDLEQVEEEMQKVDQIAMSMGLLRVGLIFSDLTDTGNGNGTVFCKRHKDSFFLSSLEIIMAAKHQLAFPNASRFSEQGKFSSKFVTCVVSGNLDSEIDITSYQVSIEAEALVDAKMISGSTHPSMAYINETNEEVYVPEIFYMKTNEYGLTVKENAKPAFPVDYLLVSLTHGFITEDSKNQIKFHSTGGFPWANRQAMGLSQDYQELKNYLYSAATGGDYNLLHEKISNFHLLLYIKSLEIFNEKDWSLLITSAISENWEQPLIQLTTTESFNSLVLIMEMI</sequence>
<protein>
    <recommendedName>
        <fullName>Nuclear protein localization protein 4</fullName>
    </recommendedName>
</protein>
<accession>A7TTC4</accession>
<feature type="chain" id="PRO_0000339456" description="Nuclear protein localization protein 4">
    <location>
        <begin position="1"/>
        <end position="568"/>
    </location>
</feature>
<feature type="domain" description="MPN" evidence="2">
    <location>
        <begin position="226"/>
        <end position="366"/>
    </location>
</feature>
<reference key="1">
    <citation type="journal article" date="2007" name="Proc. Natl. Acad. Sci. U.S.A.">
        <title>Independent sorting-out of thousands of duplicated gene pairs in two yeast species descended from a whole-genome duplication.</title>
        <authorList>
            <person name="Scannell D.R."/>
            <person name="Frank A.C."/>
            <person name="Conant G.C."/>
            <person name="Byrne K.P."/>
            <person name="Woolfit M."/>
            <person name="Wolfe K.H."/>
        </authorList>
    </citation>
    <scope>NUCLEOTIDE SEQUENCE [LARGE SCALE GENOMIC DNA]</scope>
    <source>
        <strain>ATCC 22028 / DSM 70294 / BCRC 21397 / CBS 2163 / NBRC 10782 / NRRL Y-8283 / UCD 57-17</strain>
    </source>
</reference>
<proteinExistence type="inferred from homology"/>
<gene>
    <name type="primary">NPL4</name>
    <name type="ORF">Kpol_242p4</name>
</gene>
<organism>
    <name type="scientific">Vanderwaltozyma polyspora (strain ATCC 22028 / DSM 70294 / BCRC 21397 / CBS 2163 / NBRC 10782 / NRRL Y-8283 / UCD 57-17)</name>
    <name type="common">Kluyveromyces polysporus</name>
    <dbReference type="NCBI Taxonomy" id="436907"/>
    <lineage>
        <taxon>Eukaryota</taxon>
        <taxon>Fungi</taxon>
        <taxon>Dikarya</taxon>
        <taxon>Ascomycota</taxon>
        <taxon>Saccharomycotina</taxon>
        <taxon>Saccharomycetes</taxon>
        <taxon>Saccharomycetales</taxon>
        <taxon>Saccharomycetaceae</taxon>
        <taxon>Vanderwaltozyma</taxon>
    </lineage>
</organism>
<comment type="function">
    <text evidence="1">Involved in the import of nuclear-targeted proteins into the nucleus and the export of poly(A) RNA out of the nucleus. Has a role in the endoplasmic reticulum-associated degradation (ERAD) pathway (By similarity).</text>
</comment>
<comment type="subcellular location">
    <subcellularLocation>
        <location evidence="1">Cytoplasm</location>
        <location evidence="1">Perinuclear region</location>
    </subcellularLocation>
    <subcellularLocation>
        <location evidence="1">Endoplasmic reticulum membrane</location>
        <topology evidence="1">Peripheral membrane protein</topology>
        <orientation evidence="1">Cytoplasmic side</orientation>
    </subcellularLocation>
    <subcellularLocation>
        <location evidence="1">Nucleus membrane</location>
        <topology evidence="1">Peripheral membrane protein</topology>
        <orientation evidence="1">Cytoplasmic side</orientation>
    </subcellularLocation>
    <text evidence="1">Localizes mainly at the nuclear periphery and the endoplasmic reticulum membrane.</text>
</comment>
<comment type="similarity">
    <text evidence="3">Belongs to the NPL4 family.</text>
</comment>
<dbReference type="EMBL" id="DS480559">
    <property type="protein sequence ID" value="EDO14481.1"/>
    <property type="molecule type" value="Genomic_DNA"/>
</dbReference>
<dbReference type="RefSeq" id="XP_001642339.1">
    <property type="nucleotide sequence ID" value="XM_001642289.1"/>
</dbReference>
<dbReference type="SMR" id="A7TTC4"/>
<dbReference type="FunCoup" id="A7TTC4">
    <property type="interactions" value="996"/>
</dbReference>
<dbReference type="STRING" id="436907.A7TTC4"/>
<dbReference type="GeneID" id="5542478"/>
<dbReference type="KEGG" id="vpo:Kpol_242p4"/>
<dbReference type="eggNOG" id="KOG2834">
    <property type="taxonomic scope" value="Eukaryota"/>
</dbReference>
<dbReference type="HOGENOM" id="CLU_017172_0_0_1"/>
<dbReference type="InParanoid" id="A7TTC4"/>
<dbReference type="OMA" id="TKDRYVP"/>
<dbReference type="OrthoDB" id="10251089at2759"/>
<dbReference type="PhylomeDB" id="A7TTC4"/>
<dbReference type="Proteomes" id="UP000000267">
    <property type="component" value="Unassembled WGS sequence"/>
</dbReference>
<dbReference type="GO" id="GO:0005789">
    <property type="term" value="C:endoplasmic reticulum membrane"/>
    <property type="evidence" value="ECO:0007669"/>
    <property type="project" value="UniProtKB-SubCell"/>
</dbReference>
<dbReference type="GO" id="GO:0031965">
    <property type="term" value="C:nuclear membrane"/>
    <property type="evidence" value="ECO:0007669"/>
    <property type="project" value="UniProtKB-SubCell"/>
</dbReference>
<dbReference type="GO" id="GO:0048471">
    <property type="term" value="C:perinuclear region of cytoplasm"/>
    <property type="evidence" value="ECO:0007669"/>
    <property type="project" value="UniProtKB-SubCell"/>
</dbReference>
<dbReference type="GO" id="GO:0043130">
    <property type="term" value="F:ubiquitin binding"/>
    <property type="evidence" value="ECO:0007669"/>
    <property type="project" value="TreeGrafter"/>
</dbReference>
<dbReference type="GO" id="GO:0031625">
    <property type="term" value="F:ubiquitin protein ligase binding"/>
    <property type="evidence" value="ECO:0007669"/>
    <property type="project" value="TreeGrafter"/>
</dbReference>
<dbReference type="GO" id="GO:0051028">
    <property type="term" value="P:mRNA transport"/>
    <property type="evidence" value="ECO:0007669"/>
    <property type="project" value="UniProtKB-KW"/>
</dbReference>
<dbReference type="GO" id="GO:0015031">
    <property type="term" value="P:protein transport"/>
    <property type="evidence" value="ECO:0007669"/>
    <property type="project" value="UniProtKB-KW"/>
</dbReference>
<dbReference type="GO" id="GO:0006511">
    <property type="term" value="P:ubiquitin-dependent protein catabolic process"/>
    <property type="evidence" value="ECO:0007669"/>
    <property type="project" value="InterPro"/>
</dbReference>
<dbReference type="CDD" id="cd08061">
    <property type="entry name" value="MPN_NPL4"/>
    <property type="match status" value="1"/>
</dbReference>
<dbReference type="Gene3D" id="3.10.20.90">
    <property type="entry name" value="Phosphatidylinositol 3-kinase Catalytic Subunit, Chain A, domain 1"/>
    <property type="match status" value="1"/>
</dbReference>
<dbReference type="InterPro" id="IPR037518">
    <property type="entry name" value="MPN"/>
</dbReference>
<dbReference type="InterPro" id="IPR016563">
    <property type="entry name" value="Npl4"/>
</dbReference>
<dbReference type="InterPro" id="IPR007717">
    <property type="entry name" value="NPL4_C"/>
</dbReference>
<dbReference type="InterPro" id="IPR007716">
    <property type="entry name" value="NPL4_Zn-bd_put"/>
</dbReference>
<dbReference type="InterPro" id="IPR029071">
    <property type="entry name" value="Ubiquitin-like_domsf"/>
</dbReference>
<dbReference type="PANTHER" id="PTHR12710">
    <property type="entry name" value="NUCLEAR PROTEIN LOCALIZATION 4"/>
    <property type="match status" value="1"/>
</dbReference>
<dbReference type="PANTHER" id="PTHR12710:SF0">
    <property type="entry name" value="NUCLEAR PROTEIN LOCALIZATION PROTEIN 4 HOMOLOG"/>
    <property type="match status" value="1"/>
</dbReference>
<dbReference type="Pfam" id="PF05021">
    <property type="entry name" value="NPL4"/>
    <property type="match status" value="1"/>
</dbReference>
<dbReference type="Pfam" id="PF05020">
    <property type="entry name" value="zf-NPL4"/>
    <property type="match status" value="1"/>
</dbReference>
<dbReference type="PIRSF" id="PIRSF010052">
    <property type="entry name" value="Polyub_prc_Npl4"/>
    <property type="match status" value="1"/>
</dbReference>
<dbReference type="SUPFAM" id="SSF54236">
    <property type="entry name" value="Ubiquitin-like"/>
    <property type="match status" value="1"/>
</dbReference>
<dbReference type="PROSITE" id="PS50249">
    <property type="entry name" value="MPN"/>
    <property type="match status" value="1"/>
</dbReference>
<keyword id="KW-0963">Cytoplasm</keyword>
<keyword id="KW-0256">Endoplasmic reticulum</keyword>
<keyword id="KW-0472">Membrane</keyword>
<keyword id="KW-0509">mRNA transport</keyword>
<keyword id="KW-0539">Nucleus</keyword>
<keyword id="KW-0653">Protein transport</keyword>
<keyword id="KW-1185">Reference proteome</keyword>
<keyword id="KW-0811">Translocation</keyword>
<keyword id="KW-0813">Transport</keyword>
<evidence type="ECO:0000250" key="1"/>
<evidence type="ECO:0000255" key="2">
    <source>
        <dbReference type="PROSITE-ProRule" id="PRU01182"/>
    </source>
</evidence>
<evidence type="ECO:0000305" key="3"/>
<name>NPL4_VANPO</name>